<dbReference type="EMBL" id="AY251278">
    <property type="protein sequence ID" value="AAP33143.1"/>
    <property type="molecule type" value="mRNA"/>
</dbReference>
<dbReference type="EMBL" id="AC120237">
    <property type="status" value="NOT_ANNOTATED_CDS"/>
    <property type="molecule type" value="Genomic_DNA"/>
</dbReference>
<dbReference type="EMBL" id="CH473953">
    <property type="protein sequence ID" value="EDM12588.1"/>
    <property type="molecule type" value="Genomic_DNA"/>
</dbReference>
<dbReference type="EMBL" id="BC090324">
    <property type="protein sequence ID" value="AAH90324.1"/>
    <property type="molecule type" value="mRNA"/>
</dbReference>
<dbReference type="RefSeq" id="NP_852044.1">
    <property type="nucleotide sequence ID" value="NM_181379.3"/>
</dbReference>
<dbReference type="RefSeq" id="XP_008758365.1">
    <property type="nucleotide sequence ID" value="XM_008760143.1"/>
</dbReference>
<dbReference type="SMR" id="Q80W83"/>
<dbReference type="FunCoup" id="Q80W83">
    <property type="interactions" value="1517"/>
</dbReference>
<dbReference type="STRING" id="10116.ENSRNOP00000028542"/>
<dbReference type="GlyGen" id="Q80W83">
    <property type="glycosylation" value="2 sites, 1 O-linked glycan (1 site)"/>
</dbReference>
<dbReference type="iPTMnet" id="Q80W83"/>
<dbReference type="PhosphoSitePlus" id="Q80W83"/>
<dbReference type="jPOST" id="Q80W83"/>
<dbReference type="PaxDb" id="10116-ENSRNOP00000028542"/>
<dbReference type="Ensembl" id="ENSRNOT00000028542.7">
    <property type="protein sequence ID" value="ENSRNOP00000028542.4"/>
    <property type="gene ID" value="ENSRNOG00000021025.7"/>
</dbReference>
<dbReference type="GeneID" id="309179"/>
<dbReference type="KEGG" id="rno:309179"/>
<dbReference type="UCSC" id="RGD:727786">
    <property type="organism name" value="rat"/>
</dbReference>
<dbReference type="AGR" id="RGD:727786"/>
<dbReference type="CTD" id="5526"/>
<dbReference type="RGD" id="727786">
    <property type="gene designation" value="Ppp2r5b"/>
</dbReference>
<dbReference type="eggNOG" id="KOG2085">
    <property type="taxonomic scope" value="Eukaryota"/>
</dbReference>
<dbReference type="GeneTree" id="ENSGT01030000234620"/>
<dbReference type="HOGENOM" id="CLU_012437_4_0_1"/>
<dbReference type="InParanoid" id="Q80W83"/>
<dbReference type="OMA" id="QDRRMQM"/>
<dbReference type="OrthoDB" id="10264446at2759"/>
<dbReference type="PhylomeDB" id="Q80W83"/>
<dbReference type="TreeFam" id="TF105556"/>
<dbReference type="Reactome" id="R-RNO-141444">
    <property type="pathway name" value="Amplification of signal from unattached kinetochores via a MAD2 inhibitory signal"/>
</dbReference>
<dbReference type="Reactome" id="R-RNO-195253">
    <property type="pathway name" value="Degradation of beta-catenin by the destruction complex"/>
</dbReference>
<dbReference type="Reactome" id="R-RNO-196299">
    <property type="pathway name" value="Beta-catenin phosphorylation cascade"/>
</dbReference>
<dbReference type="Reactome" id="R-RNO-2467813">
    <property type="pathway name" value="Separation of Sister Chromatids"/>
</dbReference>
<dbReference type="Reactome" id="R-RNO-2500257">
    <property type="pathway name" value="Resolution of Sister Chromatid Cohesion"/>
</dbReference>
<dbReference type="Reactome" id="R-RNO-389356">
    <property type="pathway name" value="Co-stimulation by CD28"/>
</dbReference>
<dbReference type="Reactome" id="R-RNO-389513">
    <property type="pathway name" value="Co-inhibition by CTLA4"/>
</dbReference>
<dbReference type="Reactome" id="R-RNO-432142">
    <property type="pathway name" value="Platelet sensitization by LDL"/>
</dbReference>
<dbReference type="Reactome" id="R-RNO-4641262">
    <property type="pathway name" value="Disassembly of the destruction complex and recruitment of AXIN to the membrane"/>
</dbReference>
<dbReference type="Reactome" id="R-RNO-5663220">
    <property type="pathway name" value="RHO GTPases Activate Formins"/>
</dbReference>
<dbReference type="Reactome" id="R-RNO-5673000">
    <property type="pathway name" value="RAF activation"/>
</dbReference>
<dbReference type="Reactome" id="R-RNO-5675221">
    <property type="pathway name" value="Negative regulation of MAPK pathway"/>
</dbReference>
<dbReference type="Reactome" id="R-RNO-6811558">
    <property type="pathway name" value="PI5P, PP2A and IER3 Regulate PI3K/AKT Signaling"/>
</dbReference>
<dbReference type="Reactome" id="R-RNO-68877">
    <property type="pathway name" value="Mitotic Prometaphase"/>
</dbReference>
<dbReference type="Reactome" id="R-RNO-9648025">
    <property type="pathway name" value="EML4 and NUDC in mitotic spindle formation"/>
</dbReference>
<dbReference type="PRO" id="PR:Q80W83"/>
<dbReference type="Proteomes" id="UP000002494">
    <property type="component" value="Chromosome 1"/>
</dbReference>
<dbReference type="Proteomes" id="UP000234681">
    <property type="component" value="Chromosome 1"/>
</dbReference>
<dbReference type="Bgee" id="ENSRNOG00000021025">
    <property type="expression patterns" value="Expressed in cerebellum and 19 other cell types or tissues"/>
</dbReference>
<dbReference type="GO" id="GO:0005829">
    <property type="term" value="C:cytosol"/>
    <property type="evidence" value="ECO:0000318"/>
    <property type="project" value="GO_Central"/>
</dbReference>
<dbReference type="GO" id="GO:0005634">
    <property type="term" value="C:nucleus"/>
    <property type="evidence" value="ECO:0000318"/>
    <property type="project" value="GO_Central"/>
</dbReference>
<dbReference type="GO" id="GO:0000159">
    <property type="term" value="C:protein phosphatase type 2A complex"/>
    <property type="evidence" value="ECO:0000318"/>
    <property type="project" value="GO_Central"/>
</dbReference>
<dbReference type="GO" id="GO:0072542">
    <property type="term" value="F:protein phosphatase activator activity"/>
    <property type="evidence" value="ECO:0000318"/>
    <property type="project" value="GO_Central"/>
</dbReference>
<dbReference type="GO" id="GO:0071363">
    <property type="term" value="P:cellular response to growth factor stimulus"/>
    <property type="evidence" value="ECO:0000314"/>
    <property type="project" value="MGI"/>
</dbReference>
<dbReference type="GO" id="GO:0070317">
    <property type="term" value="P:negative regulation of G0 to G1 transition"/>
    <property type="evidence" value="ECO:0000314"/>
    <property type="project" value="MGI"/>
</dbReference>
<dbReference type="GO" id="GO:0051091">
    <property type="term" value="P:positive regulation of DNA-binding transcription factor activity"/>
    <property type="evidence" value="ECO:0000314"/>
    <property type="project" value="MGI"/>
</dbReference>
<dbReference type="GO" id="GO:0010976">
    <property type="term" value="P:positive regulation of neuron projection development"/>
    <property type="evidence" value="ECO:0000314"/>
    <property type="project" value="MGI"/>
</dbReference>
<dbReference type="GO" id="GO:0051388">
    <property type="term" value="P:positive regulation of neurotrophin TRK receptor signaling pathway"/>
    <property type="evidence" value="ECO:0000315"/>
    <property type="project" value="MGI"/>
</dbReference>
<dbReference type="GO" id="GO:0031334">
    <property type="term" value="P:positive regulation of protein-containing complex assembly"/>
    <property type="evidence" value="ECO:0000314"/>
    <property type="project" value="MGI"/>
</dbReference>
<dbReference type="GO" id="GO:0045944">
    <property type="term" value="P:positive regulation of transcription by RNA polymerase II"/>
    <property type="evidence" value="ECO:0000315"/>
    <property type="project" value="MGI"/>
</dbReference>
<dbReference type="GO" id="GO:0051726">
    <property type="term" value="P:regulation of cell cycle"/>
    <property type="evidence" value="ECO:0000314"/>
    <property type="project" value="MGI"/>
</dbReference>
<dbReference type="GO" id="GO:0050730">
    <property type="term" value="P:regulation of peptidyl-tyrosine phosphorylation"/>
    <property type="evidence" value="ECO:0000315"/>
    <property type="project" value="MGI"/>
</dbReference>
<dbReference type="GO" id="GO:0031952">
    <property type="term" value="P:regulation of protein autophosphorylation"/>
    <property type="evidence" value="ECO:0000314"/>
    <property type="project" value="MGI"/>
</dbReference>
<dbReference type="GO" id="GO:0001932">
    <property type="term" value="P:regulation of protein phosphorylation"/>
    <property type="evidence" value="ECO:0000314"/>
    <property type="project" value="MGI"/>
</dbReference>
<dbReference type="GO" id="GO:0010469">
    <property type="term" value="P:regulation of signaling receptor activity"/>
    <property type="evidence" value="ECO:0000315"/>
    <property type="project" value="MGI"/>
</dbReference>
<dbReference type="GO" id="GO:0007165">
    <property type="term" value="P:signal transduction"/>
    <property type="evidence" value="ECO:0007669"/>
    <property type="project" value="InterPro"/>
</dbReference>
<dbReference type="FunFam" id="1.25.10.10:FF:000010">
    <property type="entry name" value="Serine/threonine-protein phosphatase 2A 56 kDa regulatory subunit"/>
    <property type="match status" value="1"/>
</dbReference>
<dbReference type="Gene3D" id="1.25.10.10">
    <property type="entry name" value="Leucine-rich Repeat Variant"/>
    <property type="match status" value="1"/>
</dbReference>
<dbReference type="InterPro" id="IPR011989">
    <property type="entry name" value="ARM-like"/>
</dbReference>
<dbReference type="InterPro" id="IPR016024">
    <property type="entry name" value="ARM-type_fold"/>
</dbReference>
<dbReference type="InterPro" id="IPR002554">
    <property type="entry name" value="PP2A_B56"/>
</dbReference>
<dbReference type="PANTHER" id="PTHR10257">
    <property type="entry name" value="SERINE/THREONINE PROTEIN PHOSPHATASE 2A PP2A REGULATORY SUBUNIT B"/>
    <property type="match status" value="1"/>
</dbReference>
<dbReference type="PANTHER" id="PTHR10257:SF4">
    <property type="entry name" value="SERINE_THREONINE-PROTEIN PHOSPHATASE 2A 56 KDA REGULATORY SUBUNIT BETA ISOFORM"/>
    <property type="match status" value="1"/>
</dbReference>
<dbReference type="Pfam" id="PF01603">
    <property type="entry name" value="B56"/>
    <property type="match status" value="1"/>
</dbReference>
<dbReference type="PIRSF" id="PIRSF028043">
    <property type="entry name" value="PP2A_B56"/>
    <property type="match status" value="1"/>
</dbReference>
<dbReference type="SUPFAM" id="SSF48371">
    <property type="entry name" value="ARM repeat"/>
    <property type="match status" value="1"/>
</dbReference>
<keyword id="KW-0963">Cytoplasm</keyword>
<keyword id="KW-0597">Phosphoprotein</keyword>
<keyword id="KW-1185">Reference proteome</keyword>
<keyword id="KW-0832">Ubl conjugation</keyword>
<reference key="1">
    <citation type="journal article" date="2005" name="J. Biol. Chem.">
        <title>Distinct protein phosphatase 2A heterotrimers modulate growth factor signaling to extracellular signal-regulated kinases and Akt.</title>
        <authorList>
            <person name="Van Kanegan M.J."/>
            <person name="Adams D.G."/>
            <person name="Wadzinski B.E."/>
            <person name="Strack S."/>
        </authorList>
    </citation>
    <scope>NUCLEOTIDE SEQUENCE [MRNA]</scope>
    <source>
        <strain>Sprague-Dawley</strain>
    </source>
</reference>
<reference key="2">
    <citation type="journal article" date="2004" name="Nature">
        <title>Genome sequence of the Brown Norway rat yields insights into mammalian evolution.</title>
        <authorList>
            <person name="Gibbs R.A."/>
            <person name="Weinstock G.M."/>
            <person name="Metzker M.L."/>
            <person name="Muzny D.M."/>
            <person name="Sodergren E.J."/>
            <person name="Scherer S."/>
            <person name="Scott G."/>
            <person name="Steffen D."/>
            <person name="Worley K.C."/>
            <person name="Burch P.E."/>
            <person name="Okwuonu G."/>
            <person name="Hines S."/>
            <person name="Lewis L."/>
            <person name="Deramo C."/>
            <person name="Delgado O."/>
            <person name="Dugan-Rocha S."/>
            <person name="Miner G."/>
            <person name="Morgan M."/>
            <person name="Hawes A."/>
            <person name="Gill R."/>
            <person name="Holt R.A."/>
            <person name="Adams M.D."/>
            <person name="Amanatides P.G."/>
            <person name="Baden-Tillson H."/>
            <person name="Barnstead M."/>
            <person name="Chin S."/>
            <person name="Evans C.A."/>
            <person name="Ferriera S."/>
            <person name="Fosler C."/>
            <person name="Glodek A."/>
            <person name="Gu Z."/>
            <person name="Jennings D."/>
            <person name="Kraft C.L."/>
            <person name="Nguyen T."/>
            <person name="Pfannkoch C.M."/>
            <person name="Sitter C."/>
            <person name="Sutton G.G."/>
            <person name="Venter J.C."/>
            <person name="Woodage T."/>
            <person name="Smith D."/>
            <person name="Lee H.-M."/>
            <person name="Gustafson E."/>
            <person name="Cahill P."/>
            <person name="Kana A."/>
            <person name="Doucette-Stamm L."/>
            <person name="Weinstock K."/>
            <person name="Fechtel K."/>
            <person name="Weiss R.B."/>
            <person name="Dunn D.M."/>
            <person name="Green E.D."/>
            <person name="Blakesley R.W."/>
            <person name="Bouffard G.G."/>
            <person name="De Jong P.J."/>
            <person name="Osoegawa K."/>
            <person name="Zhu B."/>
            <person name="Marra M."/>
            <person name="Schein J."/>
            <person name="Bosdet I."/>
            <person name="Fjell C."/>
            <person name="Jones S."/>
            <person name="Krzywinski M."/>
            <person name="Mathewson C."/>
            <person name="Siddiqui A."/>
            <person name="Wye N."/>
            <person name="McPherson J."/>
            <person name="Zhao S."/>
            <person name="Fraser C.M."/>
            <person name="Shetty J."/>
            <person name="Shatsman S."/>
            <person name="Geer K."/>
            <person name="Chen Y."/>
            <person name="Abramzon S."/>
            <person name="Nierman W.C."/>
            <person name="Havlak P.H."/>
            <person name="Chen R."/>
            <person name="Durbin K.J."/>
            <person name="Egan A."/>
            <person name="Ren Y."/>
            <person name="Song X.-Z."/>
            <person name="Li B."/>
            <person name="Liu Y."/>
            <person name="Qin X."/>
            <person name="Cawley S."/>
            <person name="Cooney A.J."/>
            <person name="D'Souza L.M."/>
            <person name="Martin K."/>
            <person name="Wu J.Q."/>
            <person name="Gonzalez-Garay M.L."/>
            <person name="Jackson A.R."/>
            <person name="Kalafus K.J."/>
            <person name="McLeod M.P."/>
            <person name="Milosavljevic A."/>
            <person name="Virk D."/>
            <person name="Volkov A."/>
            <person name="Wheeler D.A."/>
            <person name="Zhang Z."/>
            <person name="Bailey J.A."/>
            <person name="Eichler E.E."/>
            <person name="Tuzun E."/>
            <person name="Birney E."/>
            <person name="Mongin E."/>
            <person name="Ureta-Vidal A."/>
            <person name="Woodwark C."/>
            <person name="Zdobnov E."/>
            <person name="Bork P."/>
            <person name="Suyama M."/>
            <person name="Torrents D."/>
            <person name="Alexandersson M."/>
            <person name="Trask B.J."/>
            <person name="Young J.M."/>
            <person name="Huang H."/>
            <person name="Wang H."/>
            <person name="Xing H."/>
            <person name="Daniels S."/>
            <person name="Gietzen D."/>
            <person name="Schmidt J."/>
            <person name="Stevens K."/>
            <person name="Vitt U."/>
            <person name="Wingrove J."/>
            <person name="Camara F."/>
            <person name="Mar Alba M."/>
            <person name="Abril J.F."/>
            <person name="Guigo R."/>
            <person name="Smit A."/>
            <person name="Dubchak I."/>
            <person name="Rubin E.M."/>
            <person name="Couronne O."/>
            <person name="Poliakov A."/>
            <person name="Huebner N."/>
            <person name="Ganten D."/>
            <person name="Goesele C."/>
            <person name="Hummel O."/>
            <person name="Kreitler T."/>
            <person name="Lee Y.-A."/>
            <person name="Monti J."/>
            <person name="Schulz H."/>
            <person name="Zimdahl H."/>
            <person name="Himmelbauer H."/>
            <person name="Lehrach H."/>
            <person name="Jacob H.J."/>
            <person name="Bromberg S."/>
            <person name="Gullings-Handley J."/>
            <person name="Jensen-Seaman M.I."/>
            <person name="Kwitek A.E."/>
            <person name="Lazar J."/>
            <person name="Pasko D."/>
            <person name="Tonellato P.J."/>
            <person name="Twigger S."/>
            <person name="Ponting C.P."/>
            <person name="Duarte J.M."/>
            <person name="Rice S."/>
            <person name="Goodstadt L."/>
            <person name="Beatson S.A."/>
            <person name="Emes R.D."/>
            <person name="Winter E.E."/>
            <person name="Webber C."/>
            <person name="Brandt P."/>
            <person name="Nyakatura G."/>
            <person name="Adetobi M."/>
            <person name="Chiaromonte F."/>
            <person name="Elnitski L."/>
            <person name="Eswara P."/>
            <person name="Hardison R.C."/>
            <person name="Hou M."/>
            <person name="Kolbe D."/>
            <person name="Makova K."/>
            <person name="Miller W."/>
            <person name="Nekrutenko A."/>
            <person name="Riemer C."/>
            <person name="Schwartz S."/>
            <person name="Taylor J."/>
            <person name="Yang S."/>
            <person name="Zhang Y."/>
            <person name="Lindpaintner K."/>
            <person name="Andrews T.D."/>
            <person name="Caccamo M."/>
            <person name="Clamp M."/>
            <person name="Clarke L."/>
            <person name="Curwen V."/>
            <person name="Durbin R.M."/>
            <person name="Eyras E."/>
            <person name="Searle S.M."/>
            <person name="Cooper G.M."/>
            <person name="Batzoglou S."/>
            <person name="Brudno M."/>
            <person name="Sidow A."/>
            <person name="Stone E.A."/>
            <person name="Payseur B.A."/>
            <person name="Bourque G."/>
            <person name="Lopez-Otin C."/>
            <person name="Puente X.S."/>
            <person name="Chakrabarti K."/>
            <person name="Chatterji S."/>
            <person name="Dewey C."/>
            <person name="Pachter L."/>
            <person name="Bray N."/>
            <person name="Yap V.B."/>
            <person name="Caspi A."/>
            <person name="Tesler G."/>
            <person name="Pevzner P.A."/>
            <person name="Haussler D."/>
            <person name="Roskin K.M."/>
            <person name="Baertsch R."/>
            <person name="Clawson H."/>
            <person name="Furey T.S."/>
            <person name="Hinrichs A.S."/>
            <person name="Karolchik D."/>
            <person name="Kent W.J."/>
            <person name="Rosenbloom K.R."/>
            <person name="Trumbower H."/>
            <person name="Weirauch M."/>
            <person name="Cooper D.N."/>
            <person name="Stenson P.D."/>
            <person name="Ma B."/>
            <person name="Brent M."/>
            <person name="Arumugam M."/>
            <person name="Shteynberg D."/>
            <person name="Copley R.R."/>
            <person name="Taylor M.S."/>
            <person name="Riethman H."/>
            <person name="Mudunuri U."/>
            <person name="Peterson J."/>
            <person name="Guyer M."/>
            <person name="Felsenfeld A."/>
            <person name="Old S."/>
            <person name="Mockrin S."/>
            <person name="Collins F.S."/>
        </authorList>
    </citation>
    <scope>NUCLEOTIDE SEQUENCE [LARGE SCALE GENOMIC DNA]</scope>
    <source>
        <strain>Brown Norway</strain>
    </source>
</reference>
<reference key="3">
    <citation type="submission" date="2005-07" db="EMBL/GenBank/DDBJ databases">
        <authorList>
            <person name="Mural R.J."/>
            <person name="Adams M.D."/>
            <person name="Myers E.W."/>
            <person name="Smith H.O."/>
            <person name="Venter J.C."/>
        </authorList>
    </citation>
    <scope>NUCLEOTIDE SEQUENCE [LARGE SCALE GENOMIC DNA]</scope>
    <source>
        <strain>Brown Norway</strain>
    </source>
</reference>
<reference key="4">
    <citation type="journal article" date="2004" name="Genome Res.">
        <title>The status, quality, and expansion of the NIH full-length cDNA project: the Mammalian Gene Collection (MGC).</title>
        <authorList>
            <consortium name="The MGC Project Team"/>
        </authorList>
    </citation>
    <scope>NUCLEOTIDE SEQUENCE [LARGE SCALE MRNA]</scope>
    <source>
        <tissue>Kidney</tissue>
    </source>
</reference>
<reference key="5">
    <citation type="journal article" date="2012" name="J. Biol. Chem.">
        <title>Selective proteasomal degradation of the B'beta subunit of protein phosphatase 2A by the E3 ubiquitin ligase adaptor Kelch-like 15.</title>
        <authorList>
            <person name="Oberg E.A."/>
            <person name="Nifoussi S.K."/>
            <person name="Gingras A.C."/>
            <person name="Strack S."/>
        </authorList>
    </citation>
    <scope>TISSUE SPECIFICITY</scope>
</reference>
<accession>Q80W83</accession>
<sequence>METKLPPASTPTSPSSPGLSPVPPPDKVDGFSRRSLRRARPRRSHSSSQFRYQSNQQELTPLPLLKDVPASELHELLSRKLAQCGVMFDFLDCVADLKGKEVKRAALNELVECVGSTRGVLIEPVYPDIIRMISVNIFRTLPPSENPEFDPEEDEPNLEPSWPHLQLVYEFFLRFLESPDFQPSVAKRYVDQKFVLMLLELFDSEDPREREYLKTILHRVYGKFLGLRAYIRKQCNHIFLRFIYELEHFNGVAELLEILGSIINGFALPLKTEHKQFLVRVLIPLHSVKSLSVFHAQLAYCVVQFLEKDATLTEHVIRGLLKYWPKTCTQKEVMFLGEMEEILDVIEPSQFVKIQEPLFKQVARCVSSPHFQVAERALYFWNNEYILSLIEDNCHTVLPAVFGTLYQVSKEHWNQTIVSLIYNVLKTFMEMNGKLFDELTASYKLEKQQEQQKAQERQELWRGLEELRLRRLQGTQGAKEAPVPRPTPQVAASGGQS</sequence>
<proteinExistence type="evidence at transcript level"/>
<comment type="function">
    <text evidence="1">As the regulatory component of the serine/threonine-protein phosphatase 2A (PP2A) holoenzyme, modulates substrate specificity, subcellular localization, and responsiveness to phosphorylation. The phosphorylated form mediates the interaction between PP2A and AKT1, leading to AKT1 dephosphorylation.</text>
</comment>
<comment type="subunit">
    <text evidence="1">Component of the serine/threonine-protein phosphatase 2A complex (PP2A). This complex consists of a common heterodimeric core enzyme, composed of a 36 kDa catalytic subunit (subunit C) and a 65 kDa constant scaffold subunit (PR65 or subunit A), that associates with a variety of regulatory subunits. Proteins that associate with the core dimer include three families of regulatory subunits B (the R2/B/PR55/B55, R3/B''/PR72/PR130/PR59 and R5/B'/B56 families), the 48 kDa variable regulatory subunit, viral proteins, and cell signaling molecules. Interacts with SGO1. Interacts with AKT1.</text>
</comment>
<comment type="subcellular location">
    <subcellularLocation>
        <location evidence="1">Cytoplasm</location>
    </subcellularLocation>
</comment>
<comment type="tissue specificity">
    <text evidence="3">Widely expressed at the mRNA level, with highest levels in cerebellum and lung.</text>
</comment>
<comment type="PTM">
    <text evidence="1">Ubiquitinated by CUL3-KLHL15 complex; this modification leads to proteasomal degradation.</text>
</comment>
<comment type="similarity">
    <text evidence="4">Belongs to the phosphatase 2A regulatory subunit B56 family.</text>
</comment>
<gene>
    <name type="primary">Ppp2r5b</name>
    <name evidence="6" type="synonym">LOC100909468</name>
    <name evidence="5" type="ORF">rCG_47223</name>
</gene>
<feature type="chain" id="PRO_0000438661" description="Serine/threonine-protein phosphatase 2A 56 kDa regulatory subunit beta isoform">
    <location>
        <begin position="1"/>
        <end position="497"/>
    </location>
</feature>
<feature type="region of interest" description="Disordered" evidence="2">
    <location>
        <begin position="1"/>
        <end position="55"/>
    </location>
</feature>
<feature type="region of interest" description="Disordered" evidence="2">
    <location>
        <begin position="473"/>
        <end position="497"/>
    </location>
</feature>
<feature type="compositionally biased region" description="Low complexity" evidence="2">
    <location>
        <begin position="1"/>
        <end position="19"/>
    </location>
</feature>
<feature type="compositionally biased region" description="Basic residues" evidence="2">
    <location>
        <begin position="34"/>
        <end position="45"/>
    </location>
</feature>
<feature type="modified residue" description="Phosphoserine" evidence="1">
    <location>
        <position position="32"/>
    </location>
</feature>
<feature type="modified residue" description="Phosphoserine" evidence="1">
    <location>
        <position position="35"/>
    </location>
</feature>
<feature type="modified residue" description="Phosphoserine" evidence="1">
    <location>
        <position position="44"/>
    </location>
</feature>
<feature type="modified residue" description="Phosphoserine" evidence="1">
    <location>
        <position position="46"/>
    </location>
</feature>
<feature type="modified residue" description="Phosphoserine" evidence="1">
    <location>
        <position position="47"/>
    </location>
</feature>
<feature type="modified residue" description="Phosphoserine" evidence="1">
    <location>
        <position position="48"/>
    </location>
</feature>
<evidence type="ECO:0000250" key="1">
    <source>
        <dbReference type="UniProtKB" id="Q15173"/>
    </source>
</evidence>
<evidence type="ECO:0000256" key="2">
    <source>
        <dbReference type="SAM" id="MobiDB-lite"/>
    </source>
</evidence>
<evidence type="ECO:0000269" key="3">
    <source>
    </source>
</evidence>
<evidence type="ECO:0000305" key="4"/>
<evidence type="ECO:0000312" key="5">
    <source>
        <dbReference type="EMBL" id="EDM12588.1"/>
    </source>
</evidence>
<evidence type="ECO:0000312" key="6">
    <source>
        <dbReference type="RGD" id="727786"/>
    </source>
</evidence>
<organism>
    <name type="scientific">Rattus norvegicus</name>
    <name type="common">Rat</name>
    <dbReference type="NCBI Taxonomy" id="10116"/>
    <lineage>
        <taxon>Eukaryota</taxon>
        <taxon>Metazoa</taxon>
        <taxon>Chordata</taxon>
        <taxon>Craniata</taxon>
        <taxon>Vertebrata</taxon>
        <taxon>Euteleostomi</taxon>
        <taxon>Mammalia</taxon>
        <taxon>Eutheria</taxon>
        <taxon>Euarchontoglires</taxon>
        <taxon>Glires</taxon>
        <taxon>Rodentia</taxon>
        <taxon>Myomorpha</taxon>
        <taxon>Muroidea</taxon>
        <taxon>Muridae</taxon>
        <taxon>Murinae</taxon>
        <taxon>Rattus</taxon>
    </lineage>
</organism>
<name>2A5B_RAT</name>
<protein>
    <recommendedName>
        <fullName>Serine/threonine-protein phosphatase 2A 56 kDa regulatory subunit beta isoform</fullName>
    </recommendedName>
    <alternativeName>
        <fullName>PP2A B subunit isoform B'-beta</fullName>
    </alternativeName>
    <alternativeName>
        <fullName>PP2A B subunit isoform B56-beta</fullName>
    </alternativeName>
    <alternativeName>
        <fullName>PP2A B subunit isoform PR61-beta</fullName>
    </alternativeName>
    <alternativeName>
        <fullName>PP2A B subunit isoform R5-beta</fullName>
    </alternativeName>
</protein>